<feature type="chain" id="PRO_1000057153" description="Recombination protein RecR">
    <location>
        <begin position="1"/>
        <end position="201"/>
    </location>
</feature>
<feature type="domain" description="Toprim" evidence="1">
    <location>
        <begin position="81"/>
        <end position="176"/>
    </location>
</feature>
<feature type="zinc finger region" description="C4-type" evidence="1">
    <location>
        <begin position="57"/>
        <end position="72"/>
    </location>
</feature>
<protein>
    <recommendedName>
        <fullName evidence="1">Recombination protein RecR</fullName>
    </recommendedName>
</protein>
<keyword id="KW-0227">DNA damage</keyword>
<keyword id="KW-0233">DNA recombination</keyword>
<keyword id="KW-0234">DNA repair</keyword>
<keyword id="KW-0479">Metal-binding</keyword>
<keyword id="KW-0862">Zinc</keyword>
<keyword id="KW-0863">Zinc-finger</keyword>
<accession>A7ZXD0</accession>
<gene>
    <name evidence="1" type="primary">recR</name>
    <name type="ordered locus">EcHS_A0549</name>
</gene>
<sequence>MQTSPLLTQLMEALRCLPGVGPKSAQRMAFTLLQRDRSGGMRLAQALTRAMSEIGHCADCRTFTEQEVCNICSNPRRQENGQICVVESPADIYAIEQTGQFSGRYFVLMGHLSPLDGIGPDDIGLDRLEQRLAEEKITEVILATNPTVEGEATANYIAELCAQYDVEASRIAHGVPVGGELEMVDGTTLSHSLAGRHKIRF</sequence>
<reference key="1">
    <citation type="journal article" date="2008" name="J. Bacteriol.">
        <title>The pangenome structure of Escherichia coli: comparative genomic analysis of E. coli commensal and pathogenic isolates.</title>
        <authorList>
            <person name="Rasko D.A."/>
            <person name="Rosovitz M.J."/>
            <person name="Myers G.S.A."/>
            <person name="Mongodin E.F."/>
            <person name="Fricke W.F."/>
            <person name="Gajer P."/>
            <person name="Crabtree J."/>
            <person name="Sebaihia M."/>
            <person name="Thomson N.R."/>
            <person name="Chaudhuri R."/>
            <person name="Henderson I.R."/>
            <person name="Sperandio V."/>
            <person name="Ravel J."/>
        </authorList>
    </citation>
    <scope>NUCLEOTIDE SEQUENCE [LARGE SCALE GENOMIC DNA]</scope>
    <source>
        <strain>HS</strain>
    </source>
</reference>
<dbReference type="EMBL" id="CP000802">
    <property type="protein sequence ID" value="ABV04934.1"/>
    <property type="molecule type" value="Genomic_DNA"/>
</dbReference>
<dbReference type="RefSeq" id="WP_001195025.1">
    <property type="nucleotide sequence ID" value="NC_009800.1"/>
</dbReference>
<dbReference type="SMR" id="A7ZXD0"/>
<dbReference type="GeneID" id="93776978"/>
<dbReference type="KEGG" id="ecx:EcHS_A0549"/>
<dbReference type="HOGENOM" id="CLU_060739_1_2_6"/>
<dbReference type="GO" id="GO:0003677">
    <property type="term" value="F:DNA binding"/>
    <property type="evidence" value="ECO:0007669"/>
    <property type="project" value="UniProtKB-UniRule"/>
</dbReference>
<dbReference type="GO" id="GO:0008270">
    <property type="term" value="F:zinc ion binding"/>
    <property type="evidence" value="ECO:0007669"/>
    <property type="project" value="UniProtKB-KW"/>
</dbReference>
<dbReference type="GO" id="GO:0006310">
    <property type="term" value="P:DNA recombination"/>
    <property type="evidence" value="ECO:0007669"/>
    <property type="project" value="UniProtKB-UniRule"/>
</dbReference>
<dbReference type="GO" id="GO:0006281">
    <property type="term" value="P:DNA repair"/>
    <property type="evidence" value="ECO:0007669"/>
    <property type="project" value="UniProtKB-UniRule"/>
</dbReference>
<dbReference type="CDD" id="cd01025">
    <property type="entry name" value="TOPRIM_recR"/>
    <property type="match status" value="1"/>
</dbReference>
<dbReference type="FunFam" id="1.10.8.420:FF:000001">
    <property type="entry name" value="Recombination protein RecR"/>
    <property type="match status" value="1"/>
</dbReference>
<dbReference type="FunFam" id="3.40.1360.10:FF:000001">
    <property type="entry name" value="Recombination protein RecR"/>
    <property type="match status" value="1"/>
</dbReference>
<dbReference type="Gene3D" id="3.40.1360.10">
    <property type="match status" value="1"/>
</dbReference>
<dbReference type="Gene3D" id="6.10.250.240">
    <property type="match status" value="1"/>
</dbReference>
<dbReference type="Gene3D" id="1.10.8.420">
    <property type="entry name" value="RecR Domain 1"/>
    <property type="match status" value="1"/>
</dbReference>
<dbReference type="HAMAP" id="MF_00017">
    <property type="entry name" value="RecR"/>
    <property type="match status" value="1"/>
</dbReference>
<dbReference type="InterPro" id="IPR000093">
    <property type="entry name" value="DNA_Rcmb_RecR"/>
</dbReference>
<dbReference type="InterPro" id="IPR023627">
    <property type="entry name" value="Rcmb_RecR"/>
</dbReference>
<dbReference type="InterPro" id="IPR015967">
    <property type="entry name" value="Rcmb_RecR_Znf"/>
</dbReference>
<dbReference type="InterPro" id="IPR006171">
    <property type="entry name" value="TOPRIM_dom"/>
</dbReference>
<dbReference type="InterPro" id="IPR034137">
    <property type="entry name" value="TOPRIM_RecR"/>
</dbReference>
<dbReference type="NCBIfam" id="TIGR00615">
    <property type="entry name" value="recR"/>
    <property type="match status" value="1"/>
</dbReference>
<dbReference type="PANTHER" id="PTHR30446">
    <property type="entry name" value="RECOMBINATION PROTEIN RECR"/>
    <property type="match status" value="1"/>
</dbReference>
<dbReference type="PANTHER" id="PTHR30446:SF0">
    <property type="entry name" value="RECOMBINATION PROTEIN RECR"/>
    <property type="match status" value="1"/>
</dbReference>
<dbReference type="Pfam" id="PF21175">
    <property type="entry name" value="RecR_C"/>
    <property type="match status" value="1"/>
</dbReference>
<dbReference type="Pfam" id="PF21176">
    <property type="entry name" value="RecR_HhH"/>
    <property type="match status" value="1"/>
</dbReference>
<dbReference type="Pfam" id="PF02132">
    <property type="entry name" value="RecR_ZnF"/>
    <property type="match status" value="1"/>
</dbReference>
<dbReference type="Pfam" id="PF13662">
    <property type="entry name" value="Toprim_4"/>
    <property type="match status" value="1"/>
</dbReference>
<dbReference type="SMART" id="SM00493">
    <property type="entry name" value="TOPRIM"/>
    <property type="match status" value="1"/>
</dbReference>
<dbReference type="SUPFAM" id="SSF111304">
    <property type="entry name" value="Recombination protein RecR"/>
    <property type="match status" value="1"/>
</dbReference>
<dbReference type="PROSITE" id="PS01300">
    <property type="entry name" value="RECR"/>
    <property type="match status" value="1"/>
</dbReference>
<dbReference type="PROSITE" id="PS50880">
    <property type="entry name" value="TOPRIM"/>
    <property type="match status" value="1"/>
</dbReference>
<comment type="function">
    <text evidence="1">May play a role in DNA repair. It seems to be involved in an RecBC-independent recombinational process of DNA repair. It may act with RecF and RecO.</text>
</comment>
<comment type="similarity">
    <text evidence="1">Belongs to the RecR family.</text>
</comment>
<organism>
    <name type="scientific">Escherichia coli O9:H4 (strain HS)</name>
    <dbReference type="NCBI Taxonomy" id="331112"/>
    <lineage>
        <taxon>Bacteria</taxon>
        <taxon>Pseudomonadati</taxon>
        <taxon>Pseudomonadota</taxon>
        <taxon>Gammaproteobacteria</taxon>
        <taxon>Enterobacterales</taxon>
        <taxon>Enterobacteriaceae</taxon>
        <taxon>Escherichia</taxon>
    </lineage>
</organism>
<evidence type="ECO:0000255" key="1">
    <source>
        <dbReference type="HAMAP-Rule" id="MF_00017"/>
    </source>
</evidence>
<proteinExistence type="inferred from homology"/>
<name>RECR_ECOHS</name>